<accession>G3Y416</accession>
<protein>
    <recommendedName>
        <fullName evidence="5">Cytochrome P450 monooxygenase yanC</fullName>
        <ecNumber evidence="7">1.-.-.-</ecNumber>
    </recommendedName>
    <alternativeName>
        <fullName evidence="5">Yanuthone D biosynthesis cluster protein C</fullName>
    </alternativeName>
</protein>
<proteinExistence type="evidence at protein level"/>
<organism>
    <name type="scientific">Aspergillus niger (strain ATCC 1015 / CBS 113.46 / FGSC A1144 / LSHB Ac4 / NCTC 3858a / NRRL 328 / USDA 3528.7)</name>
    <dbReference type="NCBI Taxonomy" id="380704"/>
    <lineage>
        <taxon>Eukaryota</taxon>
        <taxon>Fungi</taxon>
        <taxon>Dikarya</taxon>
        <taxon>Ascomycota</taxon>
        <taxon>Pezizomycotina</taxon>
        <taxon>Eurotiomycetes</taxon>
        <taxon>Eurotiomycetidae</taxon>
        <taxon>Eurotiales</taxon>
        <taxon>Aspergillaceae</taxon>
        <taxon>Aspergillus</taxon>
        <taxon>Aspergillus subgen. Circumdati</taxon>
    </lineage>
</organism>
<keyword id="KW-0349">Heme</keyword>
<keyword id="KW-0408">Iron</keyword>
<keyword id="KW-0479">Metal-binding</keyword>
<keyword id="KW-0503">Monooxygenase</keyword>
<keyword id="KW-0560">Oxidoreductase</keyword>
<keyword id="KW-0732">Signal</keyword>
<name>YANC_ASPNA</name>
<feature type="signal peptide" evidence="2">
    <location>
        <begin position="1"/>
        <end position="21"/>
    </location>
</feature>
<feature type="chain" id="PRO_0000436762" description="Cytochrome P450 monooxygenase yanC" evidence="2">
    <location>
        <begin position="22"/>
        <end position="537"/>
    </location>
</feature>
<feature type="binding site" description="axial binding residue" evidence="1">
    <location>
        <position position="449"/>
    </location>
    <ligand>
        <name>heme</name>
        <dbReference type="ChEBI" id="CHEBI:30413"/>
    </ligand>
    <ligandPart>
        <name>Fe</name>
        <dbReference type="ChEBI" id="CHEBI:18248"/>
    </ligandPart>
</feature>
<comment type="function">
    <text evidence="4">Cytochrome P450 monooxygenase; part of the gene cluster that mediates the biosynthesis of yanuthone D, a fungal isoprenoid epoxycyclohexenone that acts as an antibiotic against fungi and bacteria (PubMed:24684908). The first step of the pathway is the synthesis of 6-methylsalicylic acid (6-MSA) by the polyketide synthase yanA (PubMed:24684908). 6-MSA is then converted to m-cresol by the decarboxylase yanB (PubMed:24684908). The cytochrome P450 monooxygenase yanC then catalyzes the oxidation of m-cresol to toluquinol (PubMed:24684908). Epoxidation of toluquinol is then performed by the short chain dehydrogenase yanD, with the help of yanE, and a further prenylation by yanG leads to 7-deacetoxyyanuthone A (PubMed:24684908). The next step is the hydroxylation of C-22 of 7-deacetoxyyanuthone A by the cytochrome P450 monooxygenase yanH to yield 22-deacetylyanuthone A (PubMed:24684908). O-Mevalon transferase yanI then attaches mevalon to the hydroxyl group of 22-deacetylyanuthone A to produce yanuthone E (PubMed:24684908). Finally, the FAD-dependent monooxygenase yanF oxidizes the hydroxyl group at C15 of yanuthone E to form yanuthone D (PubMed:24684908). Furthermore, several branching points in the pathway lead to the production of yanuthones F and G from 7-deacetoxyyanuthone A; yanuthones H and I from 22-deacetylyanuthone A; and yanuthone J from yanuthone E (PubMed:24684908). YanC is also involved in the synthesis of yanuthone X1 which does not have 6-methylsalicylic acid (6-MSA) as precursor (PubMed:24684908).</text>
</comment>
<comment type="cofactor">
    <cofactor evidence="1">
        <name>heme</name>
        <dbReference type="ChEBI" id="CHEBI:30413"/>
    </cofactor>
</comment>
<comment type="pathway">
    <text evidence="4">Secondary metabolite biosynthesis; terpenoid biosynthesis.</text>
</comment>
<comment type="disruption phenotype">
    <text evidence="4">Loses the ability to produce yanuthone D (PubMed:24684908). Also leads to the loss of production of yanuthone X1 which does not have 6-methylsalicylic acid (6-MSA) as a precursor (PubMed:24684908).</text>
</comment>
<comment type="biotechnology">
    <text evidence="3">Yanuthone D is an antibiotic against C.albicans, methicillin-resistant S.aureus (MRSA), and vancomycin-resistant Enterococcus (PubMed:11031048).</text>
</comment>
<comment type="similarity">
    <text evidence="6">Belongs to the cytochrome P450 family.</text>
</comment>
<dbReference type="EC" id="1.-.-.-" evidence="7"/>
<dbReference type="EMBL" id="ACJE01000012">
    <property type="protein sequence ID" value="EHA22193.1"/>
    <property type="molecule type" value="Genomic_DNA"/>
</dbReference>
<dbReference type="SMR" id="G3Y416"/>
<dbReference type="STRING" id="380704.G3Y416"/>
<dbReference type="VEuPathDB" id="FungiDB:ASPNIDRAFT2_1107512"/>
<dbReference type="HOGENOM" id="CLU_001570_2_1_1"/>
<dbReference type="OrthoDB" id="14874at5052"/>
<dbReference type="UniPathway" id="UPA00213"/>
<dbReference type="Proteomes" id="UP000009038">
    <property type="component" value="Unassembled WGS sequence"/>
</dbReference>
<dbReference type="GO" id="GO:0020037">
    <property type="term" value="F:heme binding"/>
    <property type="evidence" value="ECO:0007669"/>
    <property type="project" value="InterPro"/>
</dbReference>
<dbReference type="GO" id="GO:0005506">
    <property type="term" value="F:iron ion binding"/>
    <property type="evidence" value="ECO:0007669"/>
    <property type="project" value="InterPro"/>
</dbReference>
<dbReference type="GO" id="GO:0004497">
    <property type="term" value="F:monooxygenase activity"/>
    <property type="evidence" value="ECO:0007669"/>
    <property type="project" value="UniProtKB-KW"/>
</dbReference>
<dbReference type="GO" id="GO:0016705">
    <property type="term" value="F:oxidoreductase activity, acting on paired donors, with incorporation or reduction of molecular oxygen"/>
    <property type="evidence" value="ECO:0007669"/>
    <property type="project" value="InterPro"/>
</dbReference>
<dbReference type="GO" id="GO:0016114">
    <property type="term" value="P:terpenoid biosynthetic process"/>
    <property type="evidence" value="ECO:0007669"/>
    <property type="project" value="UniProtKB-UniPathway"/>
</dbReference>
<dbReference type="CDD" id="cd11065">
    <property type="entry name" value="CYP64-like"/>
    <property type="match status" value="1"/>
</dbReference>
<dbReference type="Gene3D" id="1.10.630.10">
    <property type="entry name" value="Cytochrome P450"/>
    <property type="match status" value="1"/>
</dbReference>
<dbReference type="InterPro" id="IPR001128">
    <property type="entry name" value="Cyt_P450"/>
</dbReference>
<dbReference type="InterPro" id="IPR002401">
    <property type="entry name" value="Cyt_P450_E_grp-I"/>
</dbReference>
<dbReference type="InterPro" id="IPR036396">
    <property type="entry name" value="Cyt_P450_sf"/>
</dbReference>
<dbReference type="InterPro" id="IPR050364">
    <property type="entry name" value="Cytochrome_P450_fung"/>
</dbReference>
<dbReference type="PANTHER" id="PTHR46300:SF2">
    <property type="entry name" value="CYTOCHROME P450 MONOOXYGENASE ALNH-RELATED"/>
    <property type="match status" value="1"/>
</dbReference>
<dbReference type="PANTHER" id="PTHR46300">
    <property type="entry name" value="P450, PUTATIVE (EUROFUNG)-RELATED-RELATED"/>
    <property type="match status" value="1"/>
</dbReference>
<dbReference type="Pfam" id="PF00067">
    <property type="entry name" value="p450"/>
    <property type="match status" value="1"/>
</dbReference>
<dbReference type="PRINTS" id="PR00463">
    <property type="entry name" value="EP450I"/>
</dbReference>
<dbReference type="SUPFAM" id="SSF48264">
    <property type="entry name" value="Cytochrome P450"/>
    <property type="match status" value="1"/>
</dbReference>
<sequence>MALVHLTALAACGLLLVILRAAFNSWRLQRKLPPGPPGAPLIGNILQLPKVRAHQKFTEWARTYGGLYSFRIGPATAAVVTDRALVKELFDKRSALYSSRPTSYVGQNIITRGDHLLVMDYSDNWRLFRKAINQHFMASMCEKTHVRLLEAEHTQMMRDFLLHPEKHMLHTKRTTNSIIMSLLFGIRTPSWDTPHMQELYEIMEIWSQIMETGATPPVDIFPWLHWVPQQWLGHWVDRSQTVARGMKRLYSSFHRRAIEARRKAESTSQSRARTFLDDVLDLQEKLGLTDNQVDFLGGVMMEGGSDTGSTMLLVMIQALALHPEIQQRARAELDAVCGEHRSPTWEDFPRLPYINMIVKETMRWRPVTPLAFPHALNKDDWVNGYFLPKGTTVFLNVWGLHHDENIFPNPDQFDPSRFEGRHKLAFDYAASPDYMQRDHYIYGAGRRLCPGIHLSERSMFLGAAKLLWAFNFEPARDEDGNPIRIDTDPVTGYTEGFLVCPRPYQCNVTPRSPAHAETILREFSRAESEVLSQYAMP</sequence>
<reference key="1">
    <citation type="journal article" date="2011" name="Genome Res.">
        <title>Comparative genomics of citric-acid-producing Aspergillus niger ATCC 1015 versus enzyme-producing CBS 513.88.</title>
        <authorList>
            <person name="Andersen M.R."/>
            <person name="Salazar M.P."/>
            <person name="Schaap P.J."/>
            <person name="van de Vondervoort P.J.I."/>
            <person name="Culley D."/>
            <person name="Thykaer J."/>
            <person name="Frisvad J.C."/>
            <person name="Nielsen K.F."/>
            <person name="Albang R."/>
            <person name="Albermann K."/>
            <person name="Berka R.M."/>
            <person name="Braus G.H."/>
            <person name="Braus-Stromeyer S.A."/>
            <person name="Corrochano L.M."/>
            <person name="Dai Z."/>
            <person name="van Dijck P.W.M."/>
            <person name="Hofmann G."/>
            <person name="Lasure L.L."/>
            <person name="Magnuson J.K."/>
            <person name="Menke H."/>
            <person name="Meijer M."/>
            <person name="Meijer S.L."/>
            <person name="Nielsen J.B."/>
            <person name="Nielsen M.L."/>
            <person name="van Ooyen A.J.J."/>
            <person name="Pel H.J."/>
            <person name="Poulsen L."/>
            <person name="Samson R.A."/>
            <person name="Stam H."/>
            <person name="Tsang A."/>
            <person name="van den Brink J.M."/>
            <person name="Atkins A."/>
            <person name="Aerts A."/>
            <person name="Shapiro H."/>
            <person name="Pangilinan J."/>
            <person name="Salamov A."/>
            <person name="Lou Y."/>
            <person name="Lindquist E."/>
            <person name="Lucas S."/>
            <person name="Grimwood J."/>
            <person name="Grigoriev I.V."/>
            <person name="Kubicek C.P."/>
            <person name="Martinez D."/>
            <person name="van Peij N.N.M.E."/>
            <person name="Roubos J.A."/>
            <person name="Nielsen J."/>
            <person name="Baker S.E."/>
        </authorList>
    </citation>
    <scope>NUCLEOTIDE SEQUENCE [LARGE SCALE GENOMIC DNA]</scope>
    <source>
        <strain>ATCC 1015 / CBS 113.46 / FGSC A1144 / LSHB Ac4 / NCTC 3858a / NRRL 328 / USDA 3528.7</strain>
    </source>
</reference>
<reference key="2">
    <citation type="journal article" date="2000" name="J. Org. Chem.">
        <title>Yanuthones: novel metabolites from a marine isolate of Aspergillus niger.</title>
        <authorList>
            <person name="Bugni T.S."/>
            <person name="Abbanat D."/>
            <person name="Bernan V.S."/>
            <person name="Maiese W.M."/>
            <person name="Greenstein M."/>
            <person name="Van Wagoner R.M."/>
            <person name="Ireland C.M."/>
        </authorList>
    </citation>
    <scope>BIOTECHNOLOGY</scope>
</reference>
<reference key="3">
    <citation type="journal article" date="2014" name="Chem. Biol.">
        <title>Molecular and chemical characterization of the biosynthesis of the 6-MSA-derived meroterpenoid yanuthone D in Aspergillus niger.</title>
        <authorList>
            <person name="Holm D.K."/>
            <person name="Petersen L.M."/>
            <person name="Klitgaard A."/>
            <person name="Knudsen P.B."/>
            <person name="Jarczynska Z.D."/>
            <person name="Nielsen K.F."/>
            <person name="Gotfredsen C.H."/>
            <person name="Larsen T.O."/>
            <person name="Mortensen U.H."/>
        </authorList>
    </citation>
    <scope>FUNCTION</scope>
    <scope>DISRUPTION PHENOTYPE</scope>
</reference>
<gene>
    <name evidence="5" type="primary">yanC</name>
    <name type="ORF">ASPNIDRAFT_54844</name>
</gene>
<evidence type="ECO:0000250" key="1">
    <source>
        <dbReference type="UniProtKB" id="P04798"/>
    </source>
</evidence>
<evidence type="ECO:0000255" key="2"/>
<evidence type="ECO:0000269" key="3">
    <source>
    </source>
</evidence>
<evidence type="ECO:0000269" key="4">
    <source>
    </source>
</evidence>
<evidence type="ECO:0000303" key="5">
    <source>
    </source>
</evidence>
<evidence type="ECO:0000305" key="6"/>
<evidence type="ECO:0000305" key="7">
    <source>
    </source>
</evidence>